<name>POC5_MOUSE</name>
<evidence type="ECO:0000250" key="1">
    <source>
        <dbReference type="UniProtKB" id="Q4V891"/>
    </source>
</evidence>
<evidence type="ECO:0000250" key="2">
    <source>
        <dbReference type="UniProtKB" id="Q8NA72"/>
    </source>
</evidence>
<evidence type="ECO:0000255" key="3"/>
<evidence type="ECO:0000256" key="4">
    <source>
        <dbReference type="SAM" id="MobiDB-lite"/>
    </source>
</evidence>
<evidence type="ECO:0000303" key="5">
    <source>
    </source>
</evidence>
<evidence type="ECO:0000305" key="6"/>
<gene>
    <name type="primary">Poc5</name>
</gene>
<keyword id="KW-0007">Acetylation</keyword>
<keyword id="KW-0025">Alternative splicing</keyword>
<keyword id="KW-0131">Cell cycle</keyword>
<keyword id="KW-0175">Coiled coil</keyword>
<keyword id="KW-0963">Cytoplasm</keyword>
<keyword id="KW-0206">Cytoskeleton</keyword>
<keyword id="KW-0597">Phosphoprotein</keyword>
<keyword id="KW-1185">Reference proteome</keyword>
<keyword id="KW-0677">Repeat</keyword>
<sequence length="558" mass="60956">MSSDEDKCSLHVAHNDSDRSVSTDLQEEYEELLRYAIVNPNVECSASQPSHLRGEVAPDRFPTLAGNNPVRDTELEVGKGSDLNISSHSKSGSPRKPSHPVMDFFSSHVLGDSSSPASLSTRTDAHEINGGEHLVSDENFQKLENILDIWSSGLKTNVLSELSKWRLNFIDWHRMEMKKEKEKHAVVVKQLSNQISDLKELQKAFEISIGRKDEVISNLSRAIGKQKERIELMKSFFRWRIGHVKSRQEIYEGKLADQYFQRTLLKKVWKGWRSVVQRQWKDVVERACQARAEEVCVQISNDYEARLAMLSGALENAKAEIQKMQQEKDHFEDSMKKAFMRGVCALNLEAMTIFQNKNEAGIDFTNNKKEESGPGGPGREPSAHLDTSSSTMPSAVPSQLLPSGPLAAGVASATAFPSAASLTSAGATSASSLHVPISILSAGSAAAPAPEESYAPRVVTAAQQKAGKTITARITGRSDFGSKARINSSLAIMGVSPPMGSVVVEKHHPVTVQTIPQATAAKYPRTIHPESSISASRSLGARPGHAQSLSVQSIKVVD</sequence>
<feature type="chain" id="PRO_0000281910" description="Centrosomal protein POC5">
    <location>
        <begin position="1"/>
        <end position="558"/>
    </location>
</feature>
<feature type="repeat" description="Centrin-binding (CBR) 1">
    <location>
        <begin position="126"/>
        <end position="157"/>
    </location>
</feature>
<feature type="repeat" description="Centrin-binding (CBR) 2">
    <location>
        <begin position="215"/>
        <end position="246"/>
    </location>
</feature>
<feature type="repeat" description="Centrin-binding (CBR) 3">
    <location>
        <begin position="247"/>
        <end position="279"/>
    </location>
</feature>
<feature type="region of interest" description="Disordered" evidence="4">
    <location>
        <begin position="1"/>
        <end position="25"/>
    </location>
</feature>
<feature type="region of interest" description="Disordered" evidence="4">
    <location>
        <begin position="53"/>
        <end position="102"/>
    </location>
</feature>
<feature type="region of interest" description="Disordered" evidence="4">
    <location>
        <begin position="364"/>
        <end position="400"/>
    </location>
</feature>
<feature type="region of interest" description="Disordered" evidence="4">
    <location>
        <begin position="532"/>
        <end position="558"/>
    </location>
</feature>
<feature type="coiled-coil region" evidence="3">
    <location>
        <begin position="175"/>
        <end position="209"/>
    </location>
</feature>
<feature type="coiled-coil region" evidence="3">
    <location>
        <begin position="300"/>
        <end position="340"/>
    </location>
</feature>
<feature type="compositionally biased region" description="Basic and acidic residues" evidence="4">
    <location>
        <begin position="1"/>
        <end position="21"/>
    </location>
</feature>
<feature type="compositionally biased region" description="Polar residues" evidence="4">
    <location>
        <begin position="83"/>
        <end position="92"/>
    </location>
</feature>
<feature type="compositionally biased region" description="Polar residues" evidence="4">
    <location>
        <begin position="385"/>
        <end position="400"/>
    </location>
</feature>
<feature type="compositionally biased region" description="Polar residues" evidence="4">
    <location>
        <begin position="547"/>
        <end position="558"/>
    </location>
</feature>
<feature type="modified residue" description="Phosphothreonine" evidence="1">
    <location>
        <position position="23"/>
    </location>
</feature>
<feature type="modified residue" description="Phosphoserine" evidence="1">
    <location>
        <position position="81"/>
    </location>
</feature>
<feature type="modified residue" description="Phosphoserine" evidence="2">
    <location>
        <position position="93"/>
    </location>
</feature>
<feature type="modified residue" description="N6-acetyllysine" evidence="2">
    <location>
        <position position="522"/>
    </location>
</feature>
<feature type="modified residue" description="Phosphoserine" evidence="2">
    <location>
        <position position="548"/>
    </location>
</feature>
<feature type="splice variant" id="VSP_024101" description="In isoform 2." evidence="5">
    <original>ISNLSRAI</original>
    <variation>LFSLPPLE</variation>
    <location>
        <begin position="216"/>
        <end position="223"/>
    </location>
</feature>
<feature type="splice variant" id="VSP_024102" description="In isoform 2." evidence="5">
    <location>
        <begin position="224"/>
        <end position="558"/>
    </location>
</feature>
<feature type="sequence conflict" description="In Ref. 2; AAH16527/AAH37631." evidence="6" ref="2">
    <original>G</original>
    <variation>D</variation>
    <location>
        <position position="111"/>
    </location>
</feature>
<reference key="1">
    <citation type="journal article" date="2005" name="Science">
        <title>The transcriptional landscape of the mammalian genome.</title>
        <authorList>
            <person name="Carninci P."/>
            <person name="Kasukawa T."/>
            <person name="Katayama S."/>
            <person name="Gough J."/>
            <person name="Frith M.C."/>
            <person name="Maeda N."/>
            <person name="Oyama R."/>
            <person name="Ravasi T."/>
            <person name="Lenhard B."/>
            <person name="Wells C."/>
            <person name="Kodzius R."/>
            <person name="Shimokawa K."/>
            <person name="Bajic V.B."/>
            <person name="Brenner S.E."/>
            <person name="Batalov S."/>
            <person name="Forrest A.R."/>
            <person name="Zavolan M."/>
            <person name="Davis M.J."/>
            <person name="Wilming L.G."/>
            <person name="Aidinis V."/>
            <person name="Allen J.E."/>
            <person name="Ambesi-Impiombato A."/>
            <person name="Apweiler R."/>
            <person name="Aturaliya R.N."/>
            <person name="Bailey T.L."/>
            <person name="Bansal M."/>
            <person name="Baxter L."/>
            <person name="Beisel K.W."/>
            <person name="Bersano T."/>
            <person name="Bono H."/>
            <person name="Chalk A.M."/>
            <person name="Chiu K.P."/>
            <person name="Choudhary V."/>
            <person name="Christoffels A."/>
            <person name="Clutterbuck D.R."/>
            <person name="Crowe M.L."/>
            <person name="Dalla E."/>
            <person name="Dalrymple B.P."/>
            <person name="de Bono B."/>
            <person name="Della Gatta G."/>
            <person name="di Bernardo D."/>
            <person name="Down T."/>
            <person name="Engstrom P."/>
            <person name="Fagiolini M."/>
            <person name="Faulkner G."/>
            <person name="Fletcher C.F."/>
            <person name="Fukushima T."/>
            <person name="Furuno M."/>
            <person name="Futaki S."/>
            <person name="Gariboldi M."/>
            <person name="Georgii-Hemming P."/>
            <person name="Gingeras T.R."/>
            <person name="Gojobori T."/>
            <person name="Green R.E."/>
            <person name="Gustincich S."/>
            <person name="Harbers M."/>
            <person name="Hayashi Y."/>
            <person name="Hensch T.K."/>
            <person name="Hirokawa N."/>
            <person name="Hill D."/>
            <person name="Huminiecki L."/>
            <person name="Iacono M."/>
            <person name="Ikeo K."/>
            <person name="Iwama A."/>
            <person name="Ishikawa T."/>
            <person name="Jakt M."/>
            <person name="Kanapin A."/>
            <person name="Katoh M."/>
            <person name="Kawasawa Y."/>
            <person name="Kelso J."/>
            <person name="Kitamura H."/>
            <person name="Kitano H."/>
            <person name="Kollias G."/>
            <person name="Krishnan S.P."/>
            <person name="Kruger A."/>
            <person name="Kummerfeld S.K."/>
            <person name="Kurochkin I.V."/>
            <person name="Lareau L.F."/>
            <person name="Lazarevic D."/>
            <person name="Lipovich L."/>
            <person name="Liu J."/>
            <person name="Liuni S."/>
            <person name="McWilliam S."/>
            <person name="Madan Babu M."/>
            <person name="Madera M."/>
            <person name="Marchionni L."/>
            <person name="Matsuda H."/>
            <person name="Matsuzawa S."/>
            <person name="Miki H."/>
            <person name="Mignone F."/>
            <person name="Miyake S."/>
            <person name="Morris K."/>
            <person name="Mottagui-Tabar S."/>
            <person name="Mulder N."/>
            <person name="Nakano N."/>
            <person name="Nakauchi H."/>
            <person name="Ng P."/>
            <person name="Nilsson R."/>
            <person name="Nishiguchi S."/>
            <person name="Nishikawa S."/>
            <person name="Nori F."/>
            <person name="Ohara O."/>
            <person name="Okazaki Y."/>
            <person name="Orlando V."/>
            <person name="Pang K.C."/>
            <person name="Pavan W.J."/>
            <person name="Pavesi G."/>
            <person name="Pesole G."/>
            <person name="Petrovsky N."/>
            <person name="Piazza S."/>
            <person name="Reed J."/>
            <person name="Reid J.F."/>
            <person name="Ring B.Z."/>
            <person name="Ringwald M."/>
            <person name="Rost B."/>
            <person name="Ruan Y."/>
            <person name="Salzberg S.L."/>
            <person name="Sandelin A."/>
            <person name="Schneider C."/>
            <person name="Schoenbach C."/>
            <person name="Sekiguchi K."/>
            <person name="Semple C.A."/>
            <person name="Seno S."/>
            <person name="Sessa L."/>
            <person name="Sheng Y."/>
            <person name="Shibata Y."/>
            <person name="Shimada H."/>
            <person name="Shimada K."/>
            <person name="Silva D."/>
            <person name="Sinclair B."/>
            <person name="Sperling S."/>
            <person name="Stupka E."/>
            <person name="Sugiura K."/>
            <person name="Sultana R."/>
            <person name="Takenaka Y."/>
            <person name="Taki K."/>
            <person name="Tammoja K."/>
            <person name="Tan S.L."/>
            <person name="Tang S."/>
            <person name="Taylor M.S."/>
            <person name="Tegner J."/>
            <person name="Teichmann S.A."/>
            <person name="Ueda H.R."/>
            <person name="van Nimwegen E."/>
            <person name="Verardo R."/>
            <person name="Wei C.L."/>
            <person name="Yagi K."/>
            <person name="Yamanishi H."/>
            <person name="Zabarovsky E."/>
            <person name="Zhu S."/>
            <person name="Zimmer A."/>
            <person name="Hide W."/>
            <person name="Bult C."/>
            <person name="Grimmond S.M."/>
            <person name="Teasdale R.D."/>
            <person name="Liu E.T."/>
            <person name="Brusic V."/>
            <person name="Quackenbush J."/>
            <person name="Wahlestedt C."/>
            <person name="Mattick J.S."/>
            <person name="Hume D.A."/>
            <person name="Kai C."/>
            <person name="Sasaki D."/>
            <person name="Tomaru Y."/>
            <person name="Fukuda S."/>
            <person name="Kanamori-Katayama M."/>
            <person name="Suzuki M."/>
            <person name="Aoki J."/>
            <person name="Arakawa T."/>
            <person name="Iida J."/>
            <person name="Imamura K."/>
            <person name="Itoh M."/>
            <person name="Kato T."/>
            <person name="Kawaji H."/>
            <person name="Kawagashira N."/>
            <person name="Kawashima T."/>
            <person name="Kojima M."/>
            <person name="Kondo S."/>
            <person name="Konno H."/>
            <person name="Nakano K."/>
            <person name="Ninomiya N."/>
            <person name="Nishio T."/>
            <person name="Okada M."/>
            <person name="Plessy C."/>
            <person name="Shibata K."/>
            <person name="Shiraki T."/>
            <person name="Suzuki S."/>
            <person name="Tagami M."/>
            <person name="Waki K."/>
            <person name="Watahiki A."/>
            <person name="Okamura-Oho Y."/>
            <person name="Suzuki H."/>
            <person name="Kawai J."/>
            <person name="Hayashizaki Y."/>
        </authorList>
    </citation>
    <scope>NUCLEOTIDE SEQUENCE [LARGE SCALE MRNA] (ISOFORMS 1 AND 2)</scope>
    <source>
        <strain>C57BL/6J</strain>
        <strain>NOD</strain>
        <tissue>Bone marrow</tissue>
        <tissue>Lung</tissue>
        <tissue>Thymus</tissue>
    </source>
</reference>
<reference key="2">
    <citation type="journal article" date="2004" name="Genome Res.">
        <title>The status, quality, and expansion of the NIH full-length cDNA project: the Mammalian Gene Collection (MGC).</title>
        <authorList>
            <consortium name="The MGC Project Team"/>
        </authorList>
    </citation>
    <scope>NUCLEOTIDE SEQUENCE [LARGE SCALE MRNA] (ISOFORM 1)</scope>
    <source>
        <strain>FVB/N</strain>
        <tissue>Eye</tissue>
        <tissue>Mammary tumor</tissue>
    </source>
</reference>
<comment type="function">
    <text evidence="2">Essential for the assembly of the distal half of centrioles, required for centriole elongation. Acts as a negative regulator of centriole elongation.</text>
</comment>
<comment type="subunit">
    <text evidence="2">Interacts with CETN2 and CETN3. Forms a microtubule-associated complex with POC1B, CETN2 and FAM161A. Interacts with CCDC15.</text>
</comment>
<comment type="subcellular location">
    <subcellularLocation>
        <location evidence="2">Cytoplasm</location>
        <location evidence="2">Cytoskeleton</location>
        <location evidence="2">Microtubule organizing center</location>
        <location evidence="2">Centrosome</location>
    </subcellularLocation>
    <subcellularLocation>
        <location evidence="2">Cytoplasm</location>
        <location evidence="2">Cytoskeleton</location>
        <location evidence="2">Microtubule organizing center</location>
        <location evidence="2">Centrosome</location>
        <location evidence="2">Centriole</location>
    </subcellularLocation>
    <text evidence="2">Localized to the distal portion of centrioles. Localizes to the inner scaffold in the central region of centrioles.</text>
</comment>
<comment type="alternative products">
    <event type="alternative splicing"/>
    <isoform>
        <id>Q9DBS8-1</id>
        <name>1</name>
        <sequence type="displayed"/>
    </isoform>
    <isoform>
        <id>Q9DBS8-2</id>
        <name>2</name>
        <sequence type="described" ref="VSP_024101 VSP_024102"/>
    </isoform>
</comment>
<comment type="PTM">
    <text evidence="2">Hyperphosphorylated during recruitment to procentrioles in G2/M phase.</text>
</comment>
<comment type="similarity">
    <text evidence="6">Belongs to the POC5 family.</text>
</comment>
<comment type="sequence caution" evidence="6">
    <conflict type="frameshift">
        <sequence resource="EMBL-CDS" id="BAB28553"/>
    </conflict>
</comment>
<dbReference type="EMBL" id="AK004769">
    <property type="protein sequence ID" value="BAB23548.1"/>
    <property type="molecule type" value="mRNA"/>
</dbReference>
<dbReference type="EMBL" id="AK012926">
    <property type="protein sequence ID" value="BAB28553.1"/>
    <property type="status" value="ALT_FRAME"/>
    <property type="molecule type" value="mRNA"/>
</dbReference>
<dbReference type="EMBL" id="AK089013">
    <property type="protein sequence ID" value="BAC40701.1"/>
    <property type="molecule type" value="mRNA"/>
</dbReference>
<dbReference type="EMBL" id="AK150656">
    <property type="protein sequence ID" value="BAE29743.1"/>
    <property type="molecule type" value="mRNA"/>
</dbReference>
<dbReference type="EMBL" id="BC016527">
    <property type="protein sequence ID" value="AAH16527.1"/>
    <property type="molecule type" value="mRNA"/>
</dbReference>
<dbReference type="EMBL" id="BC027118">
    <property type="protein sequence ID" value="AAH27118.1"/>
    <property type="molecule type" value="mRNA"/>
</dbReference>
<dbReference type="EMBL" id="BC037631">
    <property type="protein sequence ID" value="AAH37631.1"/>
    <property type="molecule type" value="mRNA"/>
</dbReference>
<dbReference type="CCDS" id="CCDS26703.1">
    <molecule id="Q9DBS8-1"/>
</dbReference>
<dbReference type="RefSeq" id="NP_080449.1">
    <molecule id="Q9DBS8-1"/>
    <property type="nucleotide sequence ID" value="NM_026173.3"/>
</dbReference>
<dbReference type="SMR" id="Q9DBS8"/>
<dbReference type="BioGRID" id="212205">
    <property type="interactions" value="1"/>
</dbReference>
<dbReference type="FunCoup" id="Q9DBS8">
    <property type="interactions" value="2917"/>
</dbReference>
<dbReference type="IntAct" id="Q9DBS8">
    <property type="interactions" value="2"/>
</dbReference>
<dbReference type="MINT" id="Q9DBS8"/>
<dbReference type="STRING" id="10090.ENSMUSP00000096898"/>
<dbReference type="iPTMnet" id="Q9DBS8"/>
<dbReference type="PhosphoSitePlus" id="Q9DBS8"/>
<dbReference type="PaxDb" id="10090-ENSMUSP00000096898"/>
<dbReference type="PeptideAtlas" id="Q9DBS8"/>
<dbReference type="ProteomicsDB" id="289356">
    <molecule id="Q9DBS8-1"/>
</dbReference>
<dbReference type="ProteomicsDB" id="289357">
    <molecule id="Q9DBS8-2"/>
</dbReference>
<dbReference type="Antibodypedia" id="49002">
    <property type="antibodies" value="103 antibodies from 17 providers"/>
</dbReference>
<dbReference type="Ensembl" id="ENSMUST00000099295.6">
    <molecule id="Q9DBS8-1"/>
    <property type="protein sequence ID" value="ENSMUSP00000096898.5"/>
    <property type="gene ID" value="ENSMUSG00000021671.10"/>
</dbReference>
<dbReference type="GeneID" id="67463"/>
<dbReference type="KEGG" id="mmu:67463"/>
<dbReference type="UCSC" id="uc007rmv.2">
    <molecule id="Q9DBS8-2"/>
    <property type="organism name" value="mouse"/>
</dbReference>
<dbReference type="UCSC" id="uc007rmw.2">
    <molecule id="Q9DBS8-1"/>
    <property type="organism name" value="mouse"/>
</dbReference>
<dbReference type="AGR" id="MGI:1914713"/>
<dbReference type="CTD" id="134359"/>
<dbReference type="MGI" id="MGI:1914713">
    <property type="gene designation" value="Poc5"/>
</dbReference>
<dbReference type="VEuPathDB" id="HostDB:ENSMUSG00000021671"/>
<dbReference type="eggNOG" id="ENOG502QUKU">
    <property type="taxonomic scope" value="Eukaryota"/>
</dbReference>
<dbReference type="GeneTree" id="ENSGT00390000004454"/>
<dbReference type="HOGENOM" id="CLU_035726_0_0_1"/>
<dbReference type="InParanoid" id="Q9DBS8"/>
<dbReference type="OMA" id="KKVWKAW"/>
<dbReference type="OrthoDB" id="10064898at2759"/>
<dbReference type="PhylomeDB" id="Q9DBS8"/>
<dbReference type="TreeFam" id="TF329296"/>
<dbReference type="BioGRID-ORCS" id="67463">
    <property type="hits" value="4 hits in 78 CRISPR screens"/>
</dbReference>
<dbReference type="ChiTaRS" id="Poc5">
    <property type="organism name" value="mouse"/>
</dbReference>
<dbReference type="PRO" id="PR:Q9DBS8"/>
<dbReference type="Proteomes" id="UP000000589">
    <property type="component" value="Chromosome 13"/>
</dbReference>
<dbReference type="RNAct" id="Q9DBS8">
    <property type="molecule type" value="protein"/>
</dbReference>
<dbReference type="Bgee" id="ENSMUSG00000021671">
    <property type="expression patterns" value="Expressed in spermatocyte and 251 other cell types or tissues"/>
</dbReference>
<dbReference type="GO" id="GO:0005814">
    <property type="term" value="C:centriole"/>
    <property type="evidence" value="ECO:0000250"/>
    <property type="project" value="UniProtKB"/>
</dbReference>
<dbReference type="GO" id="GO:0005813">
    <property type="term" value="C:centrosome"/>
    <property type="evidence" value="ECO:0000250"/>
    <property type="project" value="UniProtKB"/>
</dbReference>
<dbReference type="GO" id="GO:0005737">
    <property type="term" value="C:cytoplasm"/>
    <property type="evidence" value="ECO:0007669"/>
    <property type="project" value="UniProtKB-KW"/>
</dbReference>
<dbReference type="GO" id="GO:0042802">
    <property type="term" value="F:identical protein binding"/>
    <property type="evidence" value="ECO:0000353"/>
    <property type="project" value="MGI"/>
</dbReference>
<dbReference type="GO" id="GO:0061511">
    <property type="term" value="P:centriole elongation"/>
    <property type="evidence" value="ECO:0000250"/>
    <property type="project" value="UniProtKB"/>
</dbReference>
<dbReference type="GO" id="GO:1903723">
    <property type="term" value="P:negative regulation of centriole elongation"/>
    <property type="evidence" value="ECO:0000250"/>
    <property type="project" value="UniProtKB"/>
</dbReference>
<dbReference type="InterPro" id="IPR033351">
    <property type="entry name" value="POC5"/>
</dbReference>
<dbReference type="PANTHER" id="PTHR28618">
    <property type="entry name" value="CENTROSOMAL PROTEIN POC5"/>
    <property type="match status" value="1"/>
</dbReference>
<dbReference type="PANTHER" id="PTHR28618:SF1">
    <property type="entry name" value="CENTROSOMAL PROTEIN POC5"/>
    <property type="match status" value="1"/>
</dbReference>
<protein>
    <recommendedName>
        <fullName>Centrosomal protein POC5</fullName>
    </recommendedName>
    <alternativeName>
        <fullName>Protein of centriole 5</fullName>
    </alternativeName>
</protein>
<accession>Q9DBS8</accession>
<accession>Q8C299</accession>
<accession>Q8CI36</accession>
<accession>Q9CZ74</accession>
<organism>
    <name type="scientific">Mus musculus</name>
    <name type="common">Mouse</name>
    <dbReference type="NCBI Taxonomy" id="10090"/>
    <lineage>
        <taxon>Eukaryota</taxon>
        <taxon>Metazoa</taxon>
        <taxon>Chordata</taxon>
        <taxon>Craniata</taxon>
        <taxon>Vertebrata</taxon>
        <taxon>Euteleostomi</taxon>
        <taxon>Mammalia</taxon>
        <taxon>Eutheria</taxon>
        <taxon>Euarchontoglires</taxon>
        <taxon>Glires</taxon>
        <taxon>Rodentia</taxon>
        <taxon>Myomorpha</taxon>
        <taxon>Muroidea</taxon>
        <taxon>Muridae</taxon>
        <taxon>Murinae</taxon>
        <taxon>Mus</taxon>
        <taxon>Mus</taxon>
    </lineage>
</organism>
<proteinExistence type="evidence at transcript level"/>